<sequence length="416" mass="46689">MIQERADIEKAYASNLRKFAARLEMFLRTGVEYGTATNILSGLAKEAEDNAELHSNIAAGLINPVQLGIKNWQRENFHKSSISTSIKEVKNFDSEFENAQKTWYKHYKNVNRCKKEYFHACKTVRSLQVQVQNAKNEPFGTPEQQAQRGKELRKMEDKLRKGIMEEEKTRKAYEEAISSLSDVTPRYIEDMTQVFNKAQAFERERIVYFKEQALQMQAVLDISAKPNLSQIFVELRETVAKVDADADLKKWSLAYGVDMAPNFPVFQEYSPEMSALGKKGRSALADGSSGGVTLTSLKTFTSPDRGGPIPGTTDSGSNISTSPVHTTDYTSSVNGAAAAVSKEKQRVEDTPPYPDFVDDGRPGVPIRALYDYVGVEADELSFNSGDLFEKLEDEDEQGWCKGRKDGRVGLYPRQLR</sequence>
<organism>
    <name type="scientific">Echinococcus granulosus</name>
    <name type="common">Hydatid tapeworm</name>
    <dbReference type="NCBI Taxonomy" id="6210"/>
    <lineage>
        <taxon>Eukaryota</taxon>
        <taxon>Metazoa</taxon>
        <taxon>Spiralia</taxon>
        <taxon>Lophotrochozoa</taxon>
        <taxon>Platyhelminthes</taxon>
        <taxon>Cestoda</taxon>
        <taxon>Eucestoda</taxon>
        <taxon>Cyclophyllidea</taxon>
        <taxon>Taeniidae</taxon>
        <taxon>Echinococcus</taxon>
        <taxon>Echinococcus granulosus group</taxon>
    </lineage>
</organism>
<proteinExistence type="evidence at transcript level"/>
<gene>
    <name type="primary">EG13</name>
</gene>
<keyword id="KW-0175">Coiled coil</keyword>
<keyword id="KW-0728">SH3 domain</keyword>
<feature type="chain" id="PRO_0000086942" description="Antigen EG13">
    <location>
        <begin position="1"/>
        <end position="416"/>
    </location>
</feature>
<feature type="domain" description="F-BAR" evidence="2">
    <location>
        <begin position="1"/>
        <end position="247"/>
    </location>
</feature>
<feature type="domain" description="SH3" evidence="1">
    <location>
        <begin position="361"/>
        <end position="416"/>
    </location>
</feature>
<feature type="region of interest" description="Disordered" evidence="3">
    <location>
        <begin position="297"/>
        <end position="327"/>
    </location>
</feature>
<feature type="compositionally biased region" description="Polar residues" evidence="3">
    <location>
        <begin position="312"/>
        <end position="327"/>
    </location>
</feature>
<protein>
    <recommendedName>
        <fullName>Antigen EG13</fullName>
    </recommendedName>
</protein>
<accession>Q07839</accession>
<evidence type="ECO:0000255" key="1">
    <source>
        <dbReference type="PROSITE-ProRule" id="PRU00192"/>
    </source>
</evidence>
<evidence type="ECO:0000255" key="2">
    <source>
        <dbReference type="PROSITE-ProRule" id="PRU01077"/>
    </source>
</evidence>
<evidence type="ECO:0000256" key="3">
    <source>
        <dbReference type="SAM" id="MobiDB-lite"/>
    </source>
</evidence>
<reference key="1">
    <citation type="journal article" date="1993" name="Mol. Biochem. Parasitol.">
        <title>Molecular cloning of an echinococcal microtrichal antigen immunoreactive in Echinococcus multilocularis disease.</title>
        <authorList>
            <person name="Frosch P."/>
            <person name="Geier C."/>
            <person name="Muller A."/>
            <person name="Frosch M."/>
        </authorList>
    </citation>
    <scope>NUCLEOTIDE SEQUENCE [MRNA]</scope>
</reference>
<name>EG13_ECHGR</name>
<dbReference type="EMBL" id="M96564">
    <property type="protein sequence ID" value="AAA29053.1"/>
    <property type="molecule type" value="mRNA"/>
</dbReference>
<dbReference type="EMBL" id="M95051">
    <property type="protein sequence ID" value="AAA29059.1"/>
    <property type="molecule type" value="mRNA"/>
</dbReference>
<dbReference type="PIR" id="B48580">
    <property type="entry name" value="B48580"/>
</dbReference>
<dbReference type="SMR" id="Q07839"/>
<dbReference type="OrthoDB" id="10255128at2759"/>
<dbReference type="Proteomes" id="UP000492820">
    <property type="component" value="Unplaced"/>
</dbReference>
<dbReference type="GO" id="GO:0005768">
    <property type="term" value="C:endosome"/>
    <property type="evidence" value="ECO:0007669"/>
    <property type="project" value="TreeGrafter"/>
</dbReference>
<dbReference type="GO" id="GO:0005886">
    <property type="term" value="C:plasma membrane"/>
    <property type="evidence" value="ECO:0007669"/>
    <property type="project" value="TreeGrafter"/>
</dbReference>
<dbReference type="GO" id="GO:0005543">
    <property type="term" value="F:phospholipid binding"/>
    <property type="evidence" value="ECO:0007669"/>
    <property type="project" value="TreeGrafter"/>
</dbReference>
<dbReference type="GO" id="GO:0007010">
    <property type="term" value="P:cytoskeleton organization"/>
    <property type="evidence" value="ECO:0007669"/>
    <property type="project" value="TreeGrafter"/>
</dbReference>
<dbReference type="GO" id="GO:0097320">
    <property type="term" value="P:plasma membrane tubulation"/>
    <property type="evidence" value="ECO:0007669"/>
    <property type="project" value="TreeGrafter"/>
</dbReference>
<dbReference type="GO" id="GO:0030100">
    <property type="term" value="P:regulation of endocytosis"/>
    <property type="evidence" value="ECO:0007669"/>
    <property type="project" value="TreeGrafter"/>
</dbReference>
<dbReference type="CDD" id="cd11843">
    <property type="entry name" value="SH3_PACSIN"/>
    <property type="match status" value="1"/>
</dbReference>
<dbReference type="FunFam" id="2.30.30.40:FF:000014">
    <property type="entry name" value="Kinase C and casein kinase substrate in neurons protein"/>
    <property type="match status" value="1"/>
</dbReference>
<dbReference type="FunFam" id="1.20.1270.60:FF:000205">
    <property type="entry name" value="Protein kinase C and casein kinase substrate in neurons protein 1"/>
    <property type="match status" value="1"/>
</dbReference>
<dbReference type="Gene3D" id="1.20.1270.60">
    <property type="entry name" value="Arfaptin homology (AH) domain/BAR domain"/>
    <property type="match status" value="1"/>
</dbReference>
<dbReference type="Gene3D" id="2.30.30.40">
    <property type="entry name" value="SH3 Domains"/>
    <property type="match status" value="1"/>
</dbReference>
<dbReference type="InterPro" id="IPR027267">
    <property type="entry name" value="AH/BAR_dom_sf"/>
</dbReference>
<dbReference type="InterPro" id="IPR031160">
    <property type="entry name" value="F_BAR"/>
</dbReference>
<dbReference type="InterPro" id="IPR036028">
    <property type="entry name" value="SH3-like_dom_sf"/>
</dbReference>
<dbReference type="InterPro" id="IPR001452">
    <property type="entry name" value="SH3_domain"/>
</dbReference>
<dbReference type="PANTHER" id="PTHR23065">
    <property type="entry name" value="PROLINE-SERINE-THREONINE PHOSPHATASE INTERACTING PROTEIN 1"/>
    <property type="match status" value="1"/>
</dbReference>
<dbReference type="PANTHER" id="PTHR23065:SF11">
    <property type="entry name" value="SYNDAPIN, ISOFORM C"/>
    <property type="match status" value="1"/>
</dbReference>
<dbReference type="Pfam" id="PF00018">
    <property type="entry name" value="SH3_1"/>
    <property type="match status" value="1"/>
</dbReference>
<dbReference type="SMART" id="SM00326">
    <property type="entry name" value="SH3"/>
    <property type="match status" value="1"/>
</dbReference>
<dbReference type="SUPFAM" id="SSF103657">
    <property type="entry name" value="BAR/IMD domain-like"/>
    <property type="match status" value="1"/>
</dbReference>
<dbReference type="SUPFAM" id="SSF50044">
    <property type="entry name" value="SH3-domain"/>
    <property type="match status" value="1"/>
</dbReference>
<dbReference type="PROSITE" id="PS51741">
    <property type="entry name" value="F_BAR"/>
    <property type="match status" value="1"/>
</dbReference>
<dbReference type="PROSITE" id="PS50002">
    <property type="entry name" value="SH3"/>
    <property type="match status" value="1"/>
</dbReference>